<gene>
    <name evidence="1" type="primary">acpS</name>
    <name type="ordered locus">Adeh_1501</name>
</gene>
<protein>
    <recommendedName>
        <fullName evidence="1">Holo-[acyl-carrier-protein] synthase</fullName>
        <shortName evidence="1">Holo-ACP synthase</shortName>
        <ecNumber evidence="1">2.7.8.7</ecNumber>
    </recommendedName>
    <alternativeName>
        <fullName evidence="1">4'-phosphopantetheinyl transferase AcpS</fullName>
    </alternativeName>
</protein>
<name>ACPS_ANADE</name>
<evidence type="ECO:0000255" key="1">
    <source>
        <dbReference type="HAMAP-Rule" id="MF_00101"/>
    </source>
</evidence>
<organism>
    <name type="scientific">Anaeromyxobacter dehalogenans (strain 2CP-C)</name>
    <dbReference type="NCBI Taxonomy" id="290397"/>
    <lineage>
        <taxon>Bacteria</taxon>
        <taxon>Pseudomonadati</taxon>
        <taxon>Myxococcota</taxon>
        <taxon>Myxococcia</taxon>
        <taxon>Myxococcales</taxon>
        <taxon>Cystobacterineae</taxon>
        <taxon>Anaeromyxobacteraceae</taxon>
        <taxon>Anaeromyxobacter</taxon>
    </lineage>
</organism>
<comment type="function">
    <text evidence="1">Transfers the 4'-phosphopantetheine moiety from coenzyme A to a Ser of acyl-carrier-protein.</text>
</comment>
<comment type="catalytic activity">
    <reaction evidence="1">
        <text>apo-[ACP] + CoA = holo-[ACP] + adenosine 3',5'-bisphosphate + H(+)</text>
        <dbReference type="Rhea" id="RHEA:12068"/>
        <dbReference type="Rhea" id="RHEA-COMP:9685"/>
        <dbReference type="Rhea" id="RHEA-COMP:9690"/>
        <dbReference type="ChEBI" id="CHEBI:15378"/>
        <dbReference type="ChEBI" id="CHEBI:29999"/>
        <dbReference type="ChEBI" id="CHEBI:57287"/>
        <dbReference type="ChEBI" id="CHEBI:58343"/>
        <dbReference type="ChEBI" id="CHEBI:64479"/>
        <dbReference type="EC" id="2.7.8.7"/>
    </reaction>
</comment>
<comment type="cofactor">
    <cofactor evidence="1">
        <name>Mg(2+)</name>
        <dbReference type="ChEBI" id="CHEBI:18420"/>
    </cofactor>
</comment>
<comment type="subcellular location">
    <subcellularLocation>
        <location evidence="1">Cytoplasm</location>
    </subcellularLocation>
</comment>
<comment type="similarity">
    <text evidence="1">Belongs to the P-Pant transferase superfamily. AcpS family.</text>
</comment>
<keyword id="KW-0963">Cytoplasm</keyword>
<keyword id="KW-0275">Fatty acid biosynthesis</keyword>
<keyword id="KW-0276">Fatty acid metabolism</keyword>
<keyword id="KW-0444">Lipid biosynthesis</keyword>
<keyword id="KW-0443">Lipid metabolism</keyword>
<keyword id="KW-0460">Magnesium</keyword>
<keyword id="KW-0479">Metal-binding</keyword>
<keyword id="KW-1185">Reference proteome</keyword>
<keyword id="KW-0808">Transferase</keyword>
<accession>Q2IHZ3</accession>
<feature type="chain" id="PRO_1000008379" description="Holo-[acyl-carrier-protein] synthase">
    <location>
        <begin position="1"/>
        <end position="128"/>
    </location>
</feature>
<feature type="binding site" evidence="1">
    <location>
        <position position="8"/>
    </location>
    <ligand>
        <name>Mg(2+)</name>
        <dbReference type="ChEBI" id="CHEBI:18420"/>
    </ligand>
</feature>
<feature type="binding site" evidence="1">
    <location>
        <position position="60"/>
    </location>
    <ligand>
        <name>Mg(2+)</name>
        <dbReference type="ChEBI" id="CHEBI:18420"/>
    </ligand>
</feature>
<proteinExistence type="inferred from homology"/>
<sequence length="128" mass="13396">MILGLGLDVVEVARIQRILAGPPARAERFLARVFAPAERAYCDARQDRATRYAARFAAKEAAVKALGTPEGVRWLDLVVERGTGAPSLALDGVAADAARRMGVARVHLTLTHDGGVAVAAVILEGAGP</sequence>
<dbReference type="EC" id="2.7.8.7" evidence="1"/>
<dbReference type="EMBL" id="CP000251">
    <property type="protein sequence ID" value="ABC81274.1"/>
    <property type="molecule type" value="Genomic_DNA"/>
</dbReference>
<dbReference type="RefSeq" id="WP_011420557.1">
    <property type="nucleotide sequence ID" value="NC_007760.1"/>
</dbReference>
<dbReference type="SMR" id="Q2IHZ3"/>
<dbReference type="STRING" id="290397.Adeh_1501"/>
<dbReference type="KEGG" id="ade:Adeh_1501"/>
<dbReference type="eggNOG" id="COG0736">
    <property type="taxonomic scope" value="Bacteria"/>
</dbReference>
<dbReference type="HOGENOM" id="CLU_089696_0_0_7"/>
<dbReference type="OrthoDB" id="517356at2"/>
<dbReference type="Proteomes" id="UP000001935">
    <property type="component" value="Chromosome"/>
</dbReference>
<dbReference type="GO" id="GO:0005737">
    <property type="term" value="C:cytoplasm"/>
    <property type="evidence" value="ECO:0007669"/>
    <property type="project" value="UniProtKB-SubCell"/>
</dbReference>
<dbReference type="GO" id="GO:0008897">
    <property type="term" value="F:holo-[acyl-carrier-protein] synthase activity"/>
    <property type="evidence" value="ECO:0007669"/>
    <property type="project" value="UniProtKB-UniRule"/>
</dbReference>
<dbReference type="GO" id="GO:0000287">
    <property type="term" value="F:magnesium ion binding"/>
    <property type="evidence" value="ECO:0007669"/>
    <property type="project" value="UniProtKB-UniRule"/>
</dbReference>
<dbReference type="GO" id="GO:0006633">
    <property type="term" value="P:fatty acid biosynthetic process"/>
    <property type="evidence" value="ECO:0007669"/>
    <property type="project" value="UniProtKB-UniRule"/>
</dbReference>
<dbReference type="Gene3D" id="3.90.470.20">
    <property type="entry name" value="4'-phosphopantetheinyl transferase domain"/>
    <property type="match status" value="1"/>
</dbReference>
<dbReference type="HAMAP" id="MF_00101">
    <property type="entry name" value="AcpS"/>
    <property type="match status" value="1"/>
</dbReference>
<dbReference type="InterPro" id="IPR008278">
    <property type="entry name" value="4-PPantetheinyl_Trfase_dom"/>
</dbReference>
<dbReference type="InterPro" id="IPR037143">
    <property type="entry name" value="4-PPantetheinyl_Trfase_dom_sf"/>
</dbReference>
<dbReference type="InterPro" id="IPR002582">
    <property type="entry name" value="ACPS"/>
</dbReference>
<dbReference type="InterPro" id="IPR004568">
    <property type="entry name" value="Ppantetheine-prot_Trfase_dom"/>
</dbReference>
<dbReference type="NCBIfam" id="TIGR00516">
    <property type="entry name" value="acpS"/>
    <property type="match status" value="1"/>
</dbReference>
<dbReference type="NCBIfam" id="TIGR00556">
    <property type="entry name" value="pantethn_trn"/>
    <property type="match status" value="1"/>
</dbReference>
<dbReference type="NCBIfam" id="NF000832">
    <property type="entry name" value="PRK00070.3-2"/>
    <property type="match status" value="1"/>
</dbReference>
<dbReference type="Pfam" id="PF01648">
    <property type="entry name" value="ACPS"/>
    <property type="match status" value="1"/>
</dbReference>
<dbReference type="SUPFAM" id="SSF56214">
    <property type="entry name" value="4'-phosphopantetheinyl transferase"/>
    <property type="match status" value="1"/>
</dbReference>
<reference key="1">
    <citation type="submission" date="2006-01" db="EMBL/GenBank/DDBJ databases">
        <title>Complete sequence of Anaeromyxobacter dehalogenans 2CP-C.</title>
        <authorList>
            <person name="Copeland A."/>
            <person name="Lucas S."/>
            <person name="Lapidus A."/>
            <person name="Barry K."/>
            <person name="Detter J.C."/>
            <person name="Glavina T."/>
            <person name="Hammon N."/>
            <person name="Israni S."/>
            <person name="Pitluck S."/>
            <person name="Brettin T."/>
            <person name="Bruce D."/>
            <person name="Han C."/>
            <person name="Tapia R."/>
            <person name="Gilna P."/>
            <person name="Kiss H."/>
            <person name="Schmutz J."/>
            <person name="Larimer F."/>
            <person name="Land M."/>
            <person name="Kyrpides N."/>
            <person name="Anderson I."/>
            <person name="Sanford R.A."/>
            <person name="Ritalahti K.M."/>
            <person name="Thomas H.S."/>
            <person name="Kirby J.R."/>
            <person name="Zhulin I.B."/>
            <person name="Loeffler F.E."/>
            <person name="Richardson P."/>
        </authorList>
    </citation>
    <scope>NUCLEOTIDE SEQUENCE [LARGE SCALE GENOMIC DNA]</scope>
    <source>
        <strain>2CP-C</strain>
    </source>
</reference>